<name>SNX16_MOUSE</name>
<evidence type="ECO:0000250" key="1"/>
<evidence type="ECO:0000255" key="2"/>
<evidence type="ECO:0000255" key="3">
    <source>
        <dbReference type="PROSITE-ProRule" id="PRU00147"/>
    </source>
</evidence>
<evidence type="ECO:0000256" key="4">
    <source>
        <dbReference type="SAM" id="MobiDB-lite"/>
    </source>
</evidence>
<evidence type="ECO:0000305" key="5"/>
<evidence type="ECO:0007744" key="6">
    <source>
    </source>
</evidence>
<comment type="function">
    <text evidence="1">May be involved in several stages of intracellular trafficking. Plays a role in protein transport from early to late endosomes. Plays a role in protein transport to the lysosome. Promotes degradation of EGFR after EGF signaling (By similarity).</text>
</comment>
<comment type="subunit">
    <text evidence="1">Homooligomer. Interacts with EGFR (By similarity).</text>
</comment>
<comment type="subcellular location">
    <subcellularLocation>
        <location evidence="1">Early endosome membrane</location>
        <topology evidence="1">Peripheral membrane protein</topology>
        <orientation evidence="1">Cytoplasmic side</orientation>
    </subcellularLocation>
    <subcellularLocation>
        <location evidence="1">Late endosome membrane</location>
        <topology evidence="1">Peripheral membrane protein</topology>
        <orientation evidence="1">Cytoplasmic side</orientation>
    </subcellularLocation>
    <subcellularLocation>
        <location evidence="1">Cytoplasm</location>
    </subcellularLocation>
    <subcellularLocation>
        <location evidence="1">Lysosome</location>
    </subcellularLocation>
</comment>
<comment type="domain">
    <text evidence="1">The PX domain mediates interaction with membranes enriched in phosphatidylinositol 3-phosphate.</text>
</comment>
<comment type="similarity">
    <text evidence="5">Belongs to the sorting nexin family.</text>
</comment>
<keyword id="KW-0175">Coiled coil</keyword>
<keyword id="KW-0963">Cytoplasm</keyword>
<keyword id="KW-0967">Endosome</keyword>
<keyword id="KW-0446">Lipid-binding</keyword>
<keyword id="KW-0458">Lysosome</keyword>
<keyword id="KW-0472">Membrane</keyword>
<keyword id="KW-0597">Phosphoprotein</keyword>
<keyword id="KW-0653">Protein transport</keyword>
<keyword id="KW-1185">Reference proteome</keyword>
<keyword id="KW-0813">Transport</keyword>
<accession>Q8C080</accession>
<accession>Q9D525</accession>
<sequence>MATPYVPVPMPIGNSASSFTNNRNQRSSSFGSVSTSSTSSKGQLEDSAVGSLKQTNVQDQMDSASSMCGSPLIRTKFTGTDSSIEYSARPREAEEQHPEAVNWEDRPSTPTILGYEVMEERAKFTVYKILVKKSPEESWVVFRRYTDFSRLNDKLKEMFPGFRLALPPKRWFKDNYNAEFLEDRQLGLQAFLQNLVAHKDIANCLAVREFLCLDDPPGPFDSLEESRAFCETLEETNYHLQRELLEKQKEVESLKKLLGEKQLHIDALETRIRTLSLEPGASLYVSRAEGGQILRVEPSVLQVNRDVLDEESRADHKPHFNSREAGSVIAGIEVAQLAYNAEDD</sequence>
<dbReference type="EMBL" id="AK015872">
    <property type="protein sequence ID" value="BAB30011.1"/>
    <property type="molecule type" value="mRNA"/>
</dbReference>
<dbReference type="EMBL" id="AK032055">
    <property type="protein sequence ID" value="BAC27673.1"/>
    <property type="molecule type" value="mRNA"/>
</dbReference>
<dbReference type="EMBL" id="CH466577">
    <property type="protein sequence ID" value="EDL05159.1"/>
    <property type="molecule type" value="Genomic_DNA"/>
</dbReference>
<dbReference type="EMBL" id="BC019424">
    <property type="protein sequence ID" value="AAH19424.1"/>
    <property type="molecule type" value="mRNA"/>
</dbReference>
<dbReference type="CCDS" id="CCDS17244.1"/>
<dbReference type="RefSeq" id="NP_083344.3">
    <property type="nucleotide sequence ID" value="NM_029068.4"/>
</dbReference>
<dbReference type="RefSeq" id="XP_036019257.1">
    <property type="nucleotide sequence ID" value="XM_036163364.1"/>
</dbReference>
<dbReference type="SMR" id="Q8C080"/>
<dbReference type="BioGRID" id="216968">
    <property type="interactions" value="4"/>
</dbReference>
<dbReference type="FunCoup" id="Q8C080">
    <property type="interactions" value="2578"/>
</dbReference>
<dbReference type="STRING" id="10090.ENSMUSP00000029047"/>
<dbReference type="iPTMnet" id="Q8C080"/>
<dbReference type="PhosphoSitePlus" id="Q8C080"/>
<dbReference type="jPOST" id="Q8C080"/>
<dbReference type="PaxDb" id="10090-ENSMUSP00000029047"/>
<dbReference type="ProteomicsDB" id="261596"/>
<dbReference type="Pumba" id="Q8C080"/>
<dbReference type="Antibodypedia" id="12573">
    <property type="antibodies" value="134 antibodies from 28 providers"/>
</dbReference>
<dbReference type="DNASU" id="74718"/>
<dbReference type="Ensembl" id="ENSMUST00000029047.12">
    <property type="protein sequence ID" value="ENSMUSP00000029047.7"/>
    <property type="gene ID" value="ENSMUSG00000027534.17"/>
</dbReference>
<dbReference type="GeneID" id="74718"/>
<dbReference type="KEGG" id="mmu:74718"/>
<dbReference type="UCSC" id="uc008opw.3">
    <property type="organism name" value="mouse"/>
</dbReference>
<dbReference type="AGR" id="MGI:1921968"/>
<dbReference type="CTD" id="64089"/>
<dbReference type="MGI" id="MGI:1921968">
    <property type="gene designation" value="Snx16"/>
</dbReference>
<dbReference type="VEuPathDB" id="HostDB:ENSMUSG00000027534"/>
<dbReference type="eggNOG" id="KOG2101">
    <property type="taxonomic scope" value="Eukaryota"/>
</dbReference>
<dbReference type="GeneTree" id="ENSGT00390000005651"/>
<dbReference type="InParanoid" id="Q8C080"/>
<dbReference type="OMA" id="NWEDRPA"/>
<dbReference type="OrthoDB" id="76516at2759"/>
<dbReference type="PhylomeDB" id="Q8C080"/>
<dbReference type="TreeFam" id="TF324116"/>
<dbReference type="BioGRID-ORCS" id="74718">
    <property type="hits" value="5 hits in 77 CRISPR screens"/>
</dbReference>
<dbReference type="ChiTaRS" id="Snx16">
    <property type="organism name" value="mouse"/>
</dbReference>
<dbReference type="PRO" id="PR:Q8C080"/>
<dbReference type="Proteomes" id="UP000000589">
    <property type="component" value="Chromosome 3"/>
</dbReference>
<dbReference type="RNAct" id="Q8C080">
    <property type="molecule type" value="protein"/>
</dbReference>
<dbReference type="Bgee" id="ENSMUSG00000027534">
    <property type="expression patterns" value="Expressed in facial nucleus and 248 other cell types or tissues"/>
</dbReference>
<dbReference type="ExpressionAtlas" id="Q8C080">
    <property type="expression patterns" value="baseline and differential"/>
</dbReference>
<dbReference type="GO" id="GO:0005769">
    <property type="term" value="C:early endosome"/>
    <property type="evidence" value="ECO:0000250"/>
    <property type="project" value="UniProtKB"/>
</dbReference>
<dbReference type="GO" id="GO:0031901">
    <property type="term" value="C:early endosome membrane"/>
    <property type="evidence" value="ECO:0007669"/>
    <property type="project" value="UniProtKB-SubCell"/>
</dbReference>
<dbReference type="GO" id="GO:0010008">
    <property type="term" value="C:endosome membrane"/>
    <property type="evidence" value="ECO:0000250"/>
    <property type="project" value="UniProtKB"/>
</dbReference>
<dbReference type="GO" id="GO:0005770">
    <property type="term" value="C:late endosome"/>
    <property type="evidence" value="ECO:0000250"/>
    <property type="project" value="UniProtKB"/>
</dbReference>
<dbReference type="GO" id="GO:0031902">
    <property type="term" value="C:late endosome membrane"/>
    <property type="evidence" value="ECO:0007669"/>
    <property type="project" value="UniProtKB-SubCell"/>
</dbReference>
<dbReference type="GO" id="GO:0005764">
    <property type="term" value="C:lysosome"/>
    <property type="evidence" value="ECO:0007669"/>
    <property type="project" value="UniProtKB-SubCell"/>
</dbReference>
<dbReference type="GO" id="GO:0042802">
    <property type="term" value="F:identical protein binding"/>
    <property type="evidence" value="ECO:0007669"/>
    <property type="project" value="Ensembl"/>
</dbReference>
<dbReference type="GO" id="GO:0035091">
    <property type="term" value="F:phosphatidylinositol binding"/>
    <property type="evidence" value="ECO:0000250"/>
    <property type="project" value="UniProtKB"/>
</dbReference>
<dbReference type="GO" id="GO:0045022">
    <property type="term" value="P:early endosome to late endosome transport"/>
    <property type="evidence" value="ECO:0000250"/>
    <property type="project" value="UniProtKB"/>
</dbReference>
<dbReference type="GO" id="GO:0008333">
    <property type="term" value="P:endosome to lysosome transport"/>
    <property type="evidence" value="ECO:0000250"/>
    <property type="project" value="UniProtKB"/>
</dbReference>
<dbReference type="GO" id="GO:0006622">
    <property type="term" value="P:protein targeting to lysosome"/>
    <property type="evidence" value="ECO:0000250"/>
    <property type="project" value="UniProtKB"/>
</dbReference>
<dbReference type="CDD" id="cd07276">
    <property type="entry name" value="PX_SNX16"/>
    <property type="match status" value="1"/>
</dbReference>
<dbReference type="FunFam" id="3.30.1520.10:FF:000011">
    <property type="entry name" value="Putative sorting nexin-16"/>
    <property type="match status" value="1"/>
</dbReference>
<dbReference type="Gene3D" id="3.30.1520.10">
    <property type="entry name" value="Phox-like domain"/>
    <property type="match status" value="1"/>
</dbReference>
<dbReference type="InterPro" id="IPR001683">
    <property type="entry name" value="PX_dom"/>
</dbReference>
<dbReference type="InterPro" id="IPR036871">
    <property type="entry name" value="PX_dom_sf"/>
</dbReference>
<dbReference type="InterPro" id="IPR037911">
    <property type="entry name" value="SNX16_PX"/>
</dbReference>
<dbReference type="InterPro" id="IPR051837">
    <property type="entry name" value="SortingNexin/PXDomain-PKLike"/>
</dbReference>
<dbReference type="PANTHER" id="PTHR22999">
    <property type="entry name" value="PX SERINE/THREONINE KINASE PXK"/>
    <property type="match status" value="1"/>
</dbReference>
<dbReference type="PANTHER" id="PTHR22999:SF23">
    <property type="entry name" value="SORTING NEXIN-16"/>
    <property type="match status" value="1"/>
</dbReference>
<dbReference type="Pfam" id="PF00787">
    <property type="entry name" value="PX"/>
    <property type="match status" value="1"/>
</dbReference>
<dbReference type="SMART" id="SM00312">
    <property type="entry name" value="PX"/>
    <property type="match status" value="1"/>
</dbReference>
<dbReference type="SUPFAM" id="SSF64268">
    <property type="entry name" value="PX domain"/>
    <property type="match status" value="1"/>
</dbReference>
<dbReference type="PROSITE" id="PS50195">
    <property type="entry name" value="PX"/>
    <property type="match status" value="1"/>
</dbReference>
<feature type="chain" id="PRO_0000236204" description="Sorting nexin-16">
    <location>
        <begin position="1"/>
        <end position="344"/>
    </location>
</feature>
<feature type="domain" description="PX" evidence="3">
    <location>
        <begin position="105"/>
        <end position="218"/>
    </location>
</feature>
<feature type="region of interest" description="Disordered" evidence="4">
    <location>
        <begin position="1"/>
        <end position="72"/>
    </location>
</feature>
<feature type="coiled-coil region" evidence="2">
    <location>
        <begin position="223"/>
        <end position="278"/>
    </location>
</feature>
<feature type="compositionally biased region" description="Pro residues" evidence="4">
    <location>
        <begin position="1"/>
        <end position="10"/>
    </location>
</feature>
<feature type="compositionally biased region" description="Polar residues" evidence="4">
    <location>
        <begin position="14"/>
        <end position="26"/>
    </location>
</feature>
<feature type="compositionally biased region" description="Low complexity" evidence="4">
    <location>
        <begin position="27"/>
        <end position="40"/>
    </location>
</feature>
<feature type="compositionally biased region" description="Polar residues" evidence="4">
    <location>
        <begin position="52"/>
        <end position="68"/>
    </location>
</feature>
<feature type="binding site" evidence="1">
    <location>
        <position position="144"/>
    </location>
    <ligand>
        <name>a 1,2-diacyl-sn-glycero-3-phospho-(1D-myo-inositol-3-phosphate)</name>
        <dbReference type="ChEBI" id="CHEBI:58088"/>
    </ligand>
</feature>
<feature type="binding site" evidence="1">
    <location>
        <position position="146"/>
    </location>
    <ligand>
        <name>a 1,2-diacyl-sn-glycero-3-phospho-(1D-myo-inositol-3-phosphate)</name>
        <dbReference type="ChEBI" id="CHEBI:58088"/>
    </ligand>
</feature>
<feature type="binding site" evidence="1">
    <location>
        <position position="184"/>
    </location>
    <ligand>
        <name>a 1,2-diacyl-sn-glycero-3-phospho-(1D-myo-inositol-3-phosphate)</name>
        <dbReference type="ChEBI" id="CHEBI:58088"/>
    </ligand>
</feature>
<feature type="modified residue" description="Phosphoserine" evidence="6">
    <location>
        <position position="222"/>
    </location>
</feature>
<feature type="sequence conflict" description="In Ref. 1; BAC27673." evidence="5" ref="1">
    <original>L</original>
    <variation>V</variation>
    <location>
        <position position="181"/>
    </location>
</feature>
<proteinExistence type="evidence at protein level"/>
<protein>
    <recommendedName>
        <fullName>Sorting nexin-16</fullName>
    </recommendedName>
</protein>
<reference key="1">
    <citation type="journal article" date="2005" name="Science">
        <title>The transcriptional landscape of the mammalian genome.</title>
        <authorList>
            <person name="Carninci P."/>
            <person name="Kasukawa T."/>
            <person name="Katayama S."/>
            <person name="Gough J."/>
            <person name="Frith M.C."/>
            <person name="Maeda N."/>
            <person name="Oyama R."/>
            <person name="Ravasi T."/>
            <person name="Lenhard B."/>
            <person name="Wells C."/>
            <person name="Kodzius R."/>
            <person name="Shimokawa K."/>
            <person name="Bajic V.B."/>
            <person name="Brenner S.E."/>
            <person name="Batalov S."/>
            <person name="Forrest A.R."/>
            <person name="Zavolan M."/>
            <person name="Davis M.J."/>
            <person name="Wilming L.G."/>
            <person name="Aidinis V."/>
            <person name="Allen J.E."/>
            <person name="Ambesi-Impiombato A."/>
            <person name="Apweiler R."/>
            <person name="Aturaliya R.N."/>
            <person name="Bailey T.L."/>
            <person name="Bansal M."/>
            <person name="Baxter L."/>
            <person name="Beisel K.W."/>
            <person name="Bersano T."/>
            <person name="Bono H."/>
            <person name="Chalk A.M."/>
            <person name="Chiu K.P."/>
            <person name="Choudhary V."/>
            <person name="Christoffels A."/>
            <person name="Clutterbuck D.R."/>
            <person name="Crowe M.L."/>
            <person name="Dalla E."/>
            <person name="Dalrymple B.P."/>
            <person name="de Bono B."/>
            <person name="Della Gatta G."/>
            <person name="di Bernardo D."/>
            <person name="Down T."/>
            <person name="Engstrom P."/>
            <person name="Fagiolini M."/>
            <person name="Faulkner G."/>
            <person name="Fletcher C.F."/>
            <person name="Fukushima T."/>
            <person name="Furuno M."/>
            <person name="Futaki S."/>
            <person name="Gariboldi M."/>
            <person name="Georgii-Hemming P."/>
            <person name="Gingeras T.R."/>
            <person name="Gojobori T."/>
            <person name="Green R.E."/>
            <person name="Gustincich S."/>
            <person name="Harbers M."/>
            <person name="Hayashi Y."/>
            <person name="Hensch T.K."/>
            <person name="Hirokawa N."/>
            <person name="Hill D."/>
            <person name="Huminiecki L."/>
            <person name="Iacono M."/>
            <person name="Ikeo K."/>
            <person name="Iwama A."/>
            <person name="Ishikawa T."/>
            <person name="Jakt M."/>
            <person name="Kanapin A."/>
            <person name="Katoh M."/>
            <person name="Kawasawa Y."/>
            <person name="Kelso J."/>
            <person name="Kitamura H."/>
            <person name="Kitano H."/>
            <person name="Kollias G."/>
            <person name="Krishnan S.P."/>
            <person name="Kruger A."/>
            <person name="Kummerfeld S.K."/>
            <person name="Kurochkin I.V."/>
            <person name="Lareau L.F."/>
            <person name="Lazarevic D."/>
            <person name="Lipovich L."/>
            <person name="Liu J."/>
            <person name="Liuni S."/>
            <person name="McWilliam S."/>
            <person name="Madan Babu M."/>
            <person name="Madera M."/>
            <person name="Marchionni L."/>
            <person name="Matsuda H."/>
            <person name="Matsuzawa S."/>
            <person name="Miki H."/>
            <person name="Mignone F."/>
            <person name="Miyake S."/>
            <person name="Morris K."/>
            <person name="Mottagui-Tabar S."/>
            <person name="Mulder N."/>
            <person name="Nakano N."/>
            <person name="Nakauchi H."/>
            <person name="Ng P."/>
            <person name="Nilsson R."/>
            <person name="Nishiguchi S."/>
            <person name="Nishikawa S."/>
            <person name="Nori F."/>
            <person name="Ohara O."/>
            <person name="Okazaki Y."/>
            <person name="Orlando V."/>
            <person name="Pang K.C."/>
            <person name="Pavan W.J."/>
            <person name="Pavesi G."/>
            <person name="Pesole G."/>
            <person name="Petrovsky N."/>
            <person name="Piazza S."/>
            <person name="Reed J."/>
            <person name="Reid J.F."/>
            <person name="Ring B.Z."/>
            <person name="Ringwald M."/>
            <person name="Rost B."/>
            <person name="Ruan Y."/>
            <person name="Salzberg S.L."/>
            <person name="Sandelin A."/>
            <person name="Schneider C."/>
            <person name="Schoenbach C."/>
            <person name="Sekiguchi K."/>
            <person name="Semple C.A."/>
            <person name="Seno S."/>
            <person name="Sessa L."/>
            <person name="Sheng Y."/>
            <person name="Shibata Y."/>
            <person name="Shimada H."/>
            <person name="Shimada K."/>
            <person name="Silva D."/>
            <person name="Sinclair B."/>
            <person name="Sperling S."/>
            <person name="Stupka E."/>
            <person name="Sugiura K."/>
            <person name="Sultana R."/>
            <person name="Takenaka Y."/>
            <person name="Taki K."/>
            <person name="Tammoja K."/>
            <person name="Tan S.L."/>
            <person name="Tang S."/>
            <person name="Taylor M.S."/>
            <person name="Tegner J."/>
            <person name="Teichmann S.A."/>
            <person name="Ueda H.R."/>
            <person name="van Nimwegen E."/>
            <person name="Verardo R."/>
            <person name="Wei C.L."/>
            <person name="Yagi K."/>
            <person name="Yamanishi H."/>
            <person name="Zabarovsky E."/>
            <person name="Zhu S."/>
            <person name="Zimmer A."/>
            <person name="Hide W."/>
            <person name="Bult C."/>
            <person name="Grimmond S.M."/>
            <person name="Teasdale R.D."/>
            <person name="Liu E.T."/>
            <person name="Brusic V."/>
            <person name="Quackenbush J."/>
            <person name="Wahlestedt C."/>
            <person name="Mattick J.S."/>
            <person name="Hume D.A."/>
            <person name="Kai C."/>
            <person name="Sasaki D."/>
            <person name="Tomaru Y."/>
            <person name="Fukuda S."/>
            <person name="Kanamori-Katayama M."/>
            <person name="Suzuki M."/>
            <person name="Aoki J."/>
            <person name="Arakawa T."/>
            <person name="Iida J."/>
            <person name="Imamura K."/>
            <person name="Itoh M."/>
            <person name="Kato T."/>
            <person name="Kawaji H."/>
            <person name="Kawagashira N."/>
            <person name="Kawashima T."/>
            <person name="Kojima M."/>
            <person name="Kondo S."/>
            <person name="Konno H."/>
            <person name="Nakano K."/>
            <person name="Ninomiya N."/>
            <person name="Nishio T."/>
            <person name="Okada M."/>
            <person name="Plessy C."/>
            <person name="Shibata K."/>
            <person name="Shiraki T."/>
            <person name="Suzuki S."/>
            <person name="Tagami M."/>
            <person name="Waki K."/>
            <person name="Watahiki A."/>
            <person name="Okamura-Oho Y."/>
            <person name="Suzuki H."/>
            <person name="Kawai J."/>
            <person name="Hayashizaki Y."/>
        </authorList>
    </citation>
    <scope>NUCLEOTIDE SEQUENCE [LARGE SCALE MRNA]</scope>
    <source>
        <strain>C57BL/6J</strain>
        <tissue>Medulla oblongata</tissue>
        <tissue>Testis</tissue>
    </source>
</reference>
<reference key="2">
    <citation type="submission" date="2005-09" db="EMBL/GenBank/DDBJ databases">
        <authorList>
            <person name="Mural R.J."/>
            <person name="Adams M.D."/>
            <person name="Myers E.W."/>
            <person name="Smith H.O."/>
            <person name="Venter J.C."/>
        </authorList>
    </citation>
    <scope>NUCLEOTIDE SEQUENCE [LARGE SCALE GENOMIC DNA]</scope>
</reference>
<reference key="3">
    <citation type="journal article" date="2004" name="Genome Res.">
        <title>The status, quality, and expansion of the NIH full-length cDNA project: the Mammalian Gene Collection (MGC).</title>
        <authorList>
            <consortium name="The MGC Project Team"/>
        </authorList>
    </citation>
    <scope>NUCLEOTIDE SEQUENCE [LARGE SCALE MRNA]</scope>
    <source>
        <strain>FVB/N</strain>
        <tissue>Liver</tissue>
    </source>
</reference>
<reference key="4">
    <citation type="journal article" date="2009" name="Immunity">
        <title>The phagosomal proteome in interferon-gamma-activated macrophages.</title>
        <authorList>
            <person name="Trost M."/>
            <person name="English L."/>
            <person name="Lemieux S."/>
            <person name="Courcelles M."/>
            <person name="Desjardins M."/>
            <person name="Thibault P."/>
        </authorList>
    </citation>
    <scope>IDENTIFICATION BY MASS SPECTROMETRY [LARGE SCALE ANALYSIS]</scope>
</reference>
<reference key="5">
    <citation type="journal article" date="2010" name="Cell">
        <title>A tissue-specific atlas of mouse protein phosphorylation and expression.</title>
        <authorList>
            <person name="Huttlin E.L."/>
            <person name="Jedrychowski M.P."/>
            <person name="Elias J.E."/>
            <person name="Goswami T."/>
            <person name="Rad R."/>
            <person name="Beausoleil S.A."/>
            <person name="Villen J."/>
            <person name="Haas W."/>
            <person name="Sowa M.E."/>
            <person name="Gygi S.P."/>
        </authorList>
    </citation>
    <scope>PHOSPHORYLATION [LARGE SCALE ANALYSIS] AT SER-222</scope>
    <scope>IDENTIFICATION BY MASS SPECTROMETRY [LARGE SCALE ANALYSIS]</scope>
    <source>
        <tissue>Brain</tissue>
        <tissue>Kidney</tissue>
        <tissue>Lung</tissue>
        <tissue>Testis</tissue>
    </source>
</reference>
<gene>
    <name type="primary">Snx16</name>
</gene>
<organism>
    <name type="scientific">Mus musculus</name>
    <name type="common">Mouse</name>
    <dbReference type="NCBI Taxonomy" id="10090"/>
    <lineage>
        <taxon>Eukaryota</taxon>
        <taxon>Metazoa</taxon>
        <taxon>Chordata</taxon>
        <taxon>Craniata</taxon>
        <taxon>Vertebrata</taxon>
        <taxon>Euteleostomi</taxon>
        <taxon>Mammalia</taxon>
        <taxon>Eutheria</taxon>
        <taxon>Euarchontoglires</taxon>
        <taxon>Glires</taxon>
        <taxon>Rodentia</taxon>
        <taxon>Myomorpha</taxon>
        <taxon>Muroidea</taxon>
        <taxon>Muridae</taxon>
        <taxon>Murinae</taxon>
        <taxon>Mus</taxon>
        <taxon>Mus</taxon>
    </lineage>
</organism>